<feature type="chain" id="PRO_1000132438" description="Glycine dehydrogenase (decarboxylating)">
    <location>
        <begin position="1"/>
        <end position="957"/>
    </location>
</feature>
<feature type="modified residue" description="N6-(pyridoxal phosphate)lysine" evidence="1">
    <location>
        <position position="708"/>
    </location>
</feature>
<gene>
    <name evidence="1" type="primary">gcvP</name>
    <name type="ordered locus">ECDH10B_3077</name>
</gene>
<accession>B1XEJ0</accession>
<proteinExistence type="inferred from homology"/>
<sequence>MTQTLSQLENSGAFIERHIGPDAAQQQEMLNAVGAQSLNALTGQIVPKDIQLATPPQVGAPATEYAALAELKAIASRNKRFTSYIGMGYTAVQLPPVILRNMLENPGWYTAYTPYQPEVSQGRLEALLNFQQVTLDLTGLDMASASLLDEATAAAEAMAMAKRVSKLKNANRFFVASDVHPQTLDVVRTRAETFGFEVIVDDAQKVLDHQDVFGVLLQQVGTTGEIHDYTALISELKSRKIVVSVAADIMALVLLTAPGKQGADIVFGSAQRFGVPMGYGGPHAAFFAAKDEYKRSMPGRIIGVSKDAAGNTALRMAMQTREQHIRREKANSNICTSQVLLANIASLYAVYHGPVGLKRIANRIHRLTDILAAGLQQKGLKLRHAHYFDTLCVEVADKAGVLTRAEAAEINLRSDILNAVGITLDETTTRENVMQLFNVLLGDNHGLDIDTLDKDVAHDSRSIQPAMLRDDEILTHPVFNRYHSETEMMRYMHSLERKDLALNQAMIPLGSCTMKLNAAAEMIPITWPEFAELHPFCPPEQAEGYQQMIAQLADWLVKLTGYDAVCMQPNSGAQGEYAGLLAIRHYHESRNEGHRDICLIPASAHGTNPASAHMAGMQVVVVACDKNGNIDLTDLRAKAEQAGDNLSCIMVTYPSTHGVYEETIREVCEVVHQFGGQVYLDGANMNAQVGITSPGFIGADVSHLNLHKTFCIPHGGGGPGMGPIGVKAHLAPFVPGHSVVQIEGMLTRQGAVSAAPFGSASILPISWMYIRMMGAEGLKKASQVAILNANYIASRLQDAFPVLYTGRDGRVAHECILDIRPLKEETGISELDIAKRLIDYGFHAPTMSFPVAGTLMVEPTESESKVELDRFIDAMLAIRAEIDQVKAGVWPLEDNPLVNAPHIQSELVAEWAHPYSREVAVFPAGVADKYWPTVKRLDDVYGDRNLFCSCVPISEYQ</sequence>
<name>GCSP_ECODH</name>
<evidence type="ECO:0000255" key="1">
    <source>
        <dbReference type="HAMAP-Rule" id="MF_00711"/>
    </source>
</evidence>
<reference key="1">
    <citation type="journal article" date="2008" name="J. Bacteriol.">
        <title>The complete genome sequence of Escherichia coli DH10B: insights into the biology of a laboratory workhorse.</title>
        <authorList>
            <person name="Durfee T."/>
            <person name="Nelson R."/>
            <person name="Baldwin S."/>
            <person name="Plunkett G. III"/>
            <person name="Burland V."/>
            <person name="Mau B."/>
            <person name="Petrosino J.F."/>
            <person name="Qin X."/>
            <person name="Muzny D.M."/>
            <person name="Ayele M."/>
            <person name="Gibbs R.A."/>
            <person name="Csorgo B."/>
            <person name="Posfai G."/>
            <person name="Weinstock G.M."/>
            <person name="Blattner F.R."/>
        </authorList>
    </citation>
    <scope>NUCLEOTIDE SEQUENCE [LARGE SCALE GENOMIC DNA]</scope>
    <source>
        <strain>K12 / DH10B</strain>
    </source>
</reference>
<protein>
    <recommendedName>
        <fullName evidence="1">Glycine dehydrogenase (decarboxylating)</fullName>
        <ecNumber evidence="1">1.4.4.2</ecNumber>
    </recommendedName>
    <alternativeName>
        <fullName evidence="1">Glycine cleavage system P-protein</fullName>
    </alternativeName>
    <alternativeName>
        <fullName evidence="1">Glycine decarboxylase</fullName>
    </alternativeName>
    <alternativeName>
        <fullName evidence="1">Glycine dehydrogenase (aminomethyl-transferring)</fullName>
    </alternativeName>
</protein>
<comment type="function">
    <text evidence="1">The glycine cleavage system catalyzes the degradation of glycine. The P protein binds the alpha-amino group of glycine through its pyridoxal phosphate cofactor; CO(2) is released and the remaining methylamine moiety is then transferred to the lipoamide cofactor of the H protein.</text>
</comment>
<comment type="catalytic activity">
    <reaction evidence="1">
        <text>N(6)-[(R)-lipoyl]-L-lysyl-[glycine-cleavage complex H protein] + glycine + H(+) = N(6)-[(R)-S(8)-aminomethyldihydrolipoyl]-L-lysyl-[glycine-cleavage complex H protein] + CO2</text>
        <dbReference type="Rhea" id="RHEA:24304"/>
        <dbReference type="Rhea" id="RHEA-COMP:10494"/>
        <dbReference type="Rhea" id="RHEA-COMP:10495"/>
        <dbReference type="ChEBI" id="CHEBI:15378"/>
        <dbReference type="ChEBI" id="CHEBI:16526"/>
        <dbReference type="ChEBI" id="CHEBI:57305"/>
        <dbReference type="ChEBI" id="CHEBI:83099"/>
        <dbReference type="ChEBI" id="CHEBI:83143"/>
        <dbReference type="EC" id="1.4.4.2"/>
    </reaction>
</comment>
<comment type="cofactor">
    <cofactor evidence="1">
        <name>pyridoxal 5'-phosphate</name>
        <dbReference type="ChEBI" id="CHEBI:597326"/>
    </cofactor>
</comment>
<comment type="subunit">
    <text evidence="1">The glycine cleavage system is composed of four proteins: P, T, L and H.</text>
</comment>
<comment type="similarity">
    <text evidence="1">Belongs to the GcvP family.</text>
</comment>
<keyword id="KW-0560">Oxidoreductase</keyword>
<keyword id="KW-0663">Pyridoxal phosphate</keyword>
<organism>
    <name type="scientific">Escherichia coli (strain K12 / DH10B)</name>
    <dbReference type="NCBI Taxonomy" id="316385"/>
    <lineage>
        <taxon>Bacteria</taxon>
        <taxon>Pseudomonadati</taxon>
        <taxon>Pseudomonadota</taxon>
        <taxon>Gammaproteobacteria</taxon>
        <taxon>Enterobacterales</taxon>
        <taxon>Enterobacteriaceae</taxon>
        <taxon>Escherichia</taxon>
    </lineage>
</organism>
<dbReference type="EC" id="1.4.4.2" evidence="1"/>
<dbReference type="EMBL" id="CP000948">
    <property type="protein sequence ID" value="ACB04006.1"/>
    <property type="molecule type" value="Genomic_DNA"/>
</dbReference>
<dbReference type="RefSeq" id="WP_000195062.1">
    <property type="nucleotide sequence ID" value="NC_010473.1"/>
</dbReference>
<dbReference type="SMR" id="B1XEJ0"/>
<dbReference type="KEGG" id="ecd:ECDH10B_3077"/>
<dbReference type="HOGENOM" id="CLU_004620_1_1_6"/>
<dbReference type="GO" id="GO:0005829">
    <property type="term" value="C:cytosol"/>
    <property type="evidence" value="ECO:0007669"/>
    <property type="project" value="TreeGrafter"/>
</dbReference>
<dbReference type="GO" id="GO:0005960">
    <property type="term" value="C:glycine cleavage complex"/>
    <property type="evidence" value="ECO:0007669"/>
    <property type="project" value="TreeGrafter"/>
</dbReference>
<dbReference type="GO" id="GO:0016594">
    <property type="term" value="F:glycine binding"/>
    <property type="evidence" value="ECO:0007669"/>
    <property type="project" value="TreeGrafter"/>
</dbReference>
<dbReference type="GO" id="GO:0004375">
    <property type="term" value="F:glycine dehydrogenase (decarboxylating) activity"/>
    <property type="evidence" value="ECO:0007669"/>
    <property type="project" value="UniProtKB-EC"/>
</dbReference>
<dbReference type="GO" id="GO:0030170">
    <property type="term" value="F:pyridoxal phosphate binding"/>
    <property type="evidence" value="ECO:0007669"/>
    <property type="project" value="TreeGrafter"/>
</dbReference>
<dbReference type="GO" id="GO:0019464">
    <property type="term" value="P:glycine decarboxylation via glycine cleavage system"/>
    <property type="evidence" value="ECO:0007669"/>
    <property type="project" value="UniProtKB-UniRule"/>
</dbReference>
<dbReference type="CDD" id="cd00613">
    <property type="entry name" value="GDC-P"/>
    <property type="match status" value="2"/>
</dbReference>
<dbReference type="FunFam" id="3.40.640.10:FF:000005">
    <property type="entry name" value="Glycine dehydrogenase (decarboxylating), mitochondrial"/>
    <property type="match status" value="1"/>
</dbReference>
<dbReference type="FunFam" id="3.90.1150.10:FF:000007">
    <property type="entry name" value="Glycine dehydrogenase (decarboxylating), mitochondrial"/>
    <property type="match status" value="1"/>
</dbReference>
<dbReference type="FunFam" id="3.40.640.10:FF:000007">
    <property type="entry name" value="glycine dehydrogenase (Decarboxylating), mitochondrial"/>
    <property type="match status" value="1"/>
</dbReference>
<dbReference type="Gene3D" id="3.90.1150.10">
    <property type="entry name" value="Aspartate Aminotransferase, domain 1"/>
    <property type="match status" value="1"/>
</dbReference>
<dbReference type="Gene3D" id="3.40.640.10">
    <property type="entry name" value="Type I PLP-dependent aspartate aminotransferase-like (Major domain)"/>
    <property type="match status" value="2"/>
</dbReference>
<dbReference type="HAMAP" id="MF_00711">
    <property type="entry name" value="GcvP"/>
    <property type="match status" value="1"/>
</dbReference>
<dbReference type="InterPro" id="IPR003437">
    <property type="entry name" value="GcvP"/>
</dbReference>
<dbReference type="InterPro" id="IPR049316">
    <property type="entry name" value="GDC-P_C"/>
</dbReference>
<dbReference type="InterPro" id="IPR049315">
    <property type="entry name" value="GDC-P_N"/>
</dbReference>
<dbReference type="InterPro" id="IPR020581">
    <property type="entry name" value="GDC_P"/>
</dbReference>
<dbReference type="InterPro" id="IPR015424">
    <property type="entry name" value="PyrdxlP-dep_Trfase"/>
</dbReference>
<dbReference type="InterPro" id="IPR015421">
    <property type="entry name" value="PyrdxlP-dep_Trfase_major"/>
</dbReference>
<dbReference type="InterPro" id="IPR015422">
    <property type="entry name" value="PyrdxlP-dep_Trfase_small"/>
</dbReference>
<dbReference type="NCBIfam" id="TIGR00461">
    <property type="entry name" value="gcvP"/>
    <property type="match status" value="1"/>
</dbReference>
<dbReference type="NCBIfam" id="NF003346">
    <property type="entry name" value="PRK04366.1"/>
    <property type="match status" value="1"/>
</dbReference>
<dbReference type="PANTHER" id="PTHR11773:SF13">
    <property type="entry name" value="GLYCINE DEHYDROGENASE (DECARBOXYLATING)"/>
    <property type="match status" value="1"/>
</dbReference>
<dbReference type="PANTHER" id="PTHR11773">
    <property type="entry name" value="GLYCINE DEHYDROGENASE, DECARBOXYLATING"/>
    <property type="match status" value="1"/>
</dbReference>
<dbReference type="Pfam" id="PF21478">
    <property type="entry name" value="GcvP2_C"/>
    <property type="match status" value="1"/>
</dbReference>
<dbReference type="Pfam" id="PF02347">
    <property type="entry name" value="GDC-P"/>
    <property type="match status" value="2"/>
</dbReference>
<dbReference type="SUPFAM" id="SSF53383">
    <property type="entry name" value="PLP-dependent transferases"/>
    <property type="match status" value="2"/>
</dbReference>